<name>PAX_I68A6</name>
<keyword id="KW-1132">Decay of host mRNAs by virus</keyword>
<keyword id="KW-1262">Eukaryotic host gene expression shutoff by virus</keyword>
<keyword id="KW-1035">Host cytoplasm</keyword>
<keyword id="KW-1190">Host gene expression shutoff by virus</keyword>
<keyword id="KW-1192">Host mRNA suppression by virus</keyword>
<keyword id="KW-1048">Host nucleus</keyword>
<keyword id="KW-0945">Host-virus interaction</keyword>
<keyword id="KW-0688">Ribosomal frameshifting</keyword>
<proteinExistence type="inferred from homology"/>
<organism>
    <name type="scientific">Influenza A virus (strain A/Northern Territory/60/1968 H3N2)</name>
    <name type="common">Influenza A virus (strain NT60)</name>
    <name type="synonym">Influenza A virus (strain A/NT/60/1968 H3N2)</name>
    <dbReference type="NCBI Taxonomy" id="384505"/>
    <lineage>
        <taxon>Viruses</taxon>
        <taxon>Riboviria</taxon>
        <taxon>Orthornavirae</taxon>
        <taxon>Negarnaviricota</taxon>
        <taxon>Polyploviricotina</taxon>
        <taxon>Insthoviricetes</taxon>
        <taxon>Articulavirales</taxon>
        <taxon>Orthomyxoviridae</taxon>
        <taxon>Alphainfluenzavirus</taxon>
        <taxon>Alphainfluenzavirus influenzae</taxon>
        <taxon>Influenza A virus</taxon>
    </lineage>
</organism>
<evidence type="ECO:0000250" key="1">
    <source>
        <dbReference type="UniProtKB" id="P0CK64"/>
    </source>
</evidence>
<evidence type="ECO:0000250" key="2">
    <source>
        <dbReference type="UniProtKB" id="P0CK68"/>
    </source>
</evidence>
<evidence type="ECO:0000250" key="3">
    <source>
        <dbReference type="UniProtKB" id="P0DJW8"/>
    </source>
</evidence>
<evidence type="ECO:0000250" key="4">
    <source>
        <dbReference type="UniProtKB" id="P0DXO5"/>
    </source>
</evidence>
<evidence type="ECO:0000250" key="5">
    <source>
        <dbReference type="UniProtKB" id="P0DXO6"/>
    </source>
</evidence>
<evidence type="ECO:0000305" key="6"/>
<organismHost>
    <name type="scientific">Aves</name>
    <dbReference type="NCBI Taxonomy" id="8782"/>
</organismHost>
<organismHost>
    <name type="scientific">Cetacea</name>
    <name type="common">whales</name>
    <dbReference type="NCBI Taxonomy" id="9721"/>
</organismHost>
<organismHost>
    <name type="scientific">Homo sapiens</name>
    <name type="common">Human</name>
    <dbReference type="NCBI Taxonomy" id="9606"/>
</organismHost>
<organismHost>
    <name type="scientific">Phocidae</name>
    <name type="common">true seals</name>
    <dbReference type="NCBI Taxonomy" id="9709"/>
</organismHost>
<organismHost>
    <name type="scientific">Sus scrofa</name>
    <name type="common">Pig</name>
    <dbReference type="NCBI Taxonomy" id="9823"/>
</organismHost>
<reference key="1">
    <citation type="journal article" date="1982" name="Virology">
        <title>Influenza A virus evolution: complete sequences of influenza A/NT/60/68 RNA segment 3 and its predicted acidic P polypeptide compared with those of influenza A/PR/8/34.</title>
        <authorList>
            <person name="Bishop D.H.L."/>
            <person name="Jones K.L."/>
            <person name="Huddleston J.A."/>
            <person name="Brownlee G.G."/>
        </authorList>
    </citation>
    <scope>NUCLEOTIDE SEQUENCE [GENOMIC RNA]</scope>
</reference>
<dbReference type="EMBL" id="J02139">
    <property type="status" value="NOT_ANNOTATED_CDS"/>
    <property type="molecule type" value="Genomic_RNA"/>
</dbReference>
<dbReference type="SMR" id="P0DJT7"/>
<dbReference type="GO" id="GO:0003723">
    <property type="term" value="F:RNA binding"/>
    <property type="evidence" value="ECO:0007669"/>
    <property type="project" value="InterPro"/>
</dbReference>
<dbReference type="GO" id="GO:0039694">
    <property type="term" value="P:viral RNA genome replication"/>
    <property type="evidence" value="ECO:0007669"/>
    <property type="project" value="InterPro"/>
</dbReference>
<dbReference type="GO" id="GO:0075523">
    <property type="term" value="P:viral translational frameshifting"/>
    <property type="evidence" value="ECO:0007669"/>
    <property type="project" value="UniProtKB-KW"/>
</dbReference>
<dbReference type="FunFam" id="3.40.91.90:FF:000001">
    <property type="entry name" value="Polymerase acidic protein"/>
    <property type="match status" value="1"/>
</dbReference>
<dbReference type="Gene3D" id="3.40.91.90">
    <property type="entry name" value="Influenza RNA-dependent RNA polymerase subunit PA, endonuclease domain"/>
    <property type="match status" value="1"/>
</dbReference>
<dbReference type="InterPro" id="IPR001009">
    <property type="entry name" value="PA/PA-X"/>
</dbReference>
<dbReference type="InterPro" id="IPR038372">
    <property type="entry name" value="PA/PA-X_sf"/>
</dbReference>
<dbReference type="Pfam" id="PF00603">
    <property type="entry name" value="Flu_PA"/>
    <property type="match status" value="1"/>
</dbReference>
<feature type="chain" id="PRO_0000419400" description="Protein PA-X">
    <location>
        <begin position="1"/>
        <end position="252"/>
    </location>
</feature>
<feature type="active site" evidence="2">
    <location>
        <position position="80"/>
    </location>
</feature>
<feature type="active site" evidence="2">
    <location>
        <position position="108"/>
    </location>
</feature>
<feature type="site" description="Important for efficient shutoff activity" evidence="5">
    <location>
        <position position="28"/>
    </location>
</feature>
<feature type="site" description="Important for efficient shutoff activity" evidence="5">
    <location>
        <position position="65"/>
    </location>
</feature>
<feature type="site" description="Important for efficient shutoff activity and nuclear localization" evidence="4">
    <location>
        <position position="195"/>
    </location>
</feature>
<feature type="site" description="Important for efficient shutoff activity and nuclear localization" evidence="4">
    <location>
        <position position="198"/>
    </location>
</feature>
<feature type="site" description="Important for efficient shutoff activity and nuclear localization" evidence="4">
    <location>
        <position position="199"/>
    </location>
</feature>
<feature type="site" description="Important for efficient shutoff activity" evidence="3">
    <location>
        <position position="202"/>
    </location>
</feature>
<feature type="site" description="Important for efficient shutoff activity" evidence="3">
    <location>
        <position position="203"/>
    </location>
</feature>
<feature type="site" description="Important for efficient shutoff activity" evidence="3">
    <location>
        <position position="206"/>
    </location>
</feature>
<sequence length="252" mass="29364">MEDFVRQCFNPMIVELAEKAMKEYGEDLKIETNKFAAICTHLEVCFMYSDFHFINEQGESIVVELDDPNALLKHRFEIIEGRDRTMAWTVVNSICNTTGAEKPKFLPDLYDYKENRFIEIGVTRREVHIYYLEKANKIKSENTHIHIFSFTGEEMATKADYTLDEESRARIKTRLFTIRQEMANRGLWDSFVSPKEAKKQLKKDLKSQGQCAGLPTKVSRRTSPALRILEPMWMDSNRTATLRASFLKCPKK</sequence>
<comment type="function">
    <text evidence="1 4">Plays a major role in the shutoff of the host protein expression by cleaving mRNAs probably via an endonuclease activity. This host shutoff allows the virus to escape from the host antiviral response (By similarity). Hijacks host RNA splicing machinery to selectively target host RNAs containing introns for destruction. This may explain the preferential degradation of RNAs that have undergone co- or post-transcriptional processing (By similarity).</text>
</comment>
<comment type="subcellular location">
    <subcellularLocation>
        <location evidence="4">Host cytoplasm</location>
    </subcellularLocation>
    <subcellularLocation>
        <location evidence="4">Host nucleus</location>
    </subcellularLocation>
</comment>
<comment type="alternative products">
    <event type="ribosomal frameshifting"/>
    <isoform>
        <id>P0DJT7-1</id>
        <name>PA-X</name>
        <sequence type="displayed"/>
    </isoform>
    <isoform>
        <id>P03434-1</id>
        <name>PA</name>
        <sequence type="external"/>
    </isoform>
</comment>
<comment type="domain">
    <text evidence="1 4">The probable endonuclease active site in the N-terminus and the basic amino acid cluster in the C-terminus are important for the shutoff activity. The C-terminus acts as a nuclear localization signal (By similarity). The C-terminus is recruited to host protein complexes involved in nuclear Pol II RNA processing (By similarity).</text>
</comment>
<comment type="similarity">
    <text evidence="6">Belongs to the influenza viruses PA-X family.</text>
</comment>
<gene>
    <name type="primary">PA</name>
</gene>
<protein>
    <recommendedName>
        <fullName>Protein PA-X</fullName>
    </recommendedName>
</protein>
<accession>P0DJT7</accession>